<reference key="1">
    <citation type="journal article" date="2002" name="Proc. Natl. Acad. Sci. U.S.A.">
        <title>Complete genome sequence of Clostridium perfringens, an anaerobic flesh-eater.</title>
        <authorList>
            <person name="Shimizu T."/>
            <person name="Ohtani K."/>
            <person name="Hirakawa H."/>
            <person name="Ohshima K."/>
            <person name="Yamashita A."/>
            <person name="Shiba T."/>
            <person name="Ogasawara N."/>
            <person name="Hattori M."/>
            <person name="Kuhara S."/>
            <person name="Hayashi H."/>
        </authorList>
    </citation>
    <scope>NUCLEOTIDE SEQUENCE [LARGE SCALE GENOMIC DNA]</scope>
    <source>
        <strain>13 / Type A</strain>
    </source>
</reference>
<reference key="2">
    <citation type="journal article" date="2002" name="J. Bacteriol.">
        <title>Genomic analysis of Clostridium perfringens bacteriophage phi3626, which integrates into guaA and possibly affects sporulation.</title>
        <authorList>
            <person name="Zimmer M."/>
            <person name="Scherer S."/>
            <person name="Loessner M.J."/>
        </authorList>
    </citation>
    <scope>NUCLEOTIDE SEQUENCE [GENOMIC DNA] OF 290-509</scope>
    <source>
        <strain>ATCC 3626 / NCIB 10691 / Type B</strain>
    </source>
</reference>
<name>GUAA_CLOPE</name>
<comment type="function">
    <text evidence="1">Catalyzes the synthesis of GMP from XMP.</text>
</comment>
<comment type="catalytic activity">
    <reaction evidence="1">
        <text>XMP + L-glutamine + ATP + H2O = GMP + L-glutamate + AMP + diphosphate + 2 H(+)</text>
        <dbReference type="Rhea" id="RHEA:11680"/>
        <dbReference type="ChEBI" id="CHEBI:15377"/>
        <dbReference type="ChEBI" id="CHEBI:15378"/>
        <dbReference type="ChEBI" id="CHEBI:29985"/>
        <dbReference type="ChEBI" id="CHEBI:30616"/>
        <dbReference type="ChEBI" id="CHEBI:33019"/>
        <dbReference type="ChEBI" id="CHEBI:57464"/>
        <dbReference type="ChEBI" id="CHEBI:58115"/>
        <dbReference type="ChEBI" id="CHEBI:58359"/>
        <dbReference type="ChEBI" id="CHEBI:456215"/>
        <dbReference type="EC" id="6.3.5.2"/>
    </reaction>
</comment>
<comment type="pathway">
    <text evidence="1">Purine metabolism; GMP biosynthesis; GMP from XMP (L-Gln route): step 1/1.</text>
</comment>
<comment type="subunit">
    <text evidence="1">Homodimer.</text>
</comment>
<sequence length="509" mass="56843">MRDLVLVVDFGGQYNQLIARRVRECGVYCEIIPYTYSIEKIKEKNPKGIIFTGGPNSVYGENTPTLDKEIFNLNVPVLGICYGDQLMAHLLGGKVDTAPVREYGKTNVTLDNSSKLFAGIEADETCWMSHTDYIAEAPEGFKIIAHTDVCPVAAMENEERRLYGVQFHPEVEHTPFGQNMMRNFLYNICGLENSWSMASFAEEKIAEIKKIVGDKKLICALSGGVDSSVAAVMVHKAVGKQLTCIFVDHGLLRKDEGDQVEKIFKEGFDMNLIRVNAQDRFLGKLKGVSDPETKRKIIGEEFIRVFEEEAGKLGDIKFLVQGTIYPDVVESGTDTSAVIKSHHNVGGLPEDMEFSLIEPLRELFKDEVRAVGEELGIPHHLVWRQPFPGPGLAIRVLGEVTEDKLEVVREADAIFREEIALAGLESEIWQYFAVLPNIQSVGVMGDERTYCHTVGLRAVTSSDGMTSNWAHIPYEVIDKVSRRIVNEVKGVNRIVYDVTSKPPATIEWE</sequence>
<feature type="chain" id="PRO_0000140114" description="GMP synthase [glutamine-hydrolyzing]">
    <location>
        <begin position="1"/>
        <end position="509"/>
    </location>
</feature>
<feature type="domain" description="Glutamine amidotransferase type-1" evidence="1">
    <location>
        <begin position="4"/>
        <end position="194"/>
    </location>
</feature>
<feature type="domain" description="GMPS ATP-PPase" evidence="1">
    <location>
        <begin position="195"/>
        <end position="384"/>
    </location>
</feature>
<feature type="active site" description="Nucleophile" evidence="1">
    <location>
        <position position="81"/>
    </location>
</feature>
<feature type="active site" evidence="1">
    <location>
        <position position="168"/>
    </location>
</feature>
<feature type="active site" evidence="1">
    <location>
        <position position="170"/>
    </location>
</feature>
<feature type="binding site" evidence="1">
    <location>
        <begin position="222"/>
        <end position="228"/>
    </location>
    <ligand>
        <name>ATP</name>
        <dbReference type="ChEBI" id="CHEBI:30616"/>
    </ligand>
</feature>
<gene>
    <name evidence="1" type="primary">guaA</name>
    <name type="ordered locus">CPE2275</name>
</gene>
<evidence type="ECO:0000255" key="1">
    <source>
        <dbReference type="HAMAP-Rule" id="MF_00344"/>
    </source>
</evidence>
<keyword id="KW-0067">ATP-binding</keyword>
<keyword id="KW-0315">Glutamine amidotransferase</keyword>
<keyword id="KW-0332">GMP biosynthesis</keyword>
<keyword id="KW-0436">Ligase</keyword>
<keyword id="KW-0547">Nucleotide-binding</keyword>
<keyword id="KW-0658">Purine biosynthesis</keyword>
<keyword id="KW-1185">Reference proteome</keyword>
<organism>
    <name type="scientific">Clostridium perfringens (strain 13 / Type A)</name>
    <dbReference type="NCBI Taxonomy" id="195102"/>
    <lineage>
        <taxon>Bacteria</taxon>
        <taxon>Bacillati</taxon>
        <taxon>Bacillota</taxon>
        <taxon>Clostridia</taxon>
        <taxon>Eubacteriales</taxon>
        <taxon>Clostridiaceae</taxon>
        <taxon>Clostridium</taxon>
    </lineage>
</organism>
<accession>Q8XI46</accession>
<accession>Q8RLC2</accession>
<protein>
    <recommendedName>
        <fullName evidence="1">GMP synthase [glutamine-hydrolyzing]</fullName>
        <ecNumber evidence="1">6.3.5.2</ecNumber>
    </recommendedName>
    <alternativeName>
        <fullName evidence="1">GMP synthetase</fullName>
    </alternativeName>
    <alternativeName>
        <fullName evidence="1">Glutamine amidotransferase</fullName>
    </alternativeName>
</protein>
<dbReference type="EC" id="6.3.5.2" evidence="1"/>
<dbReference type="EMBL" id="BA000016">
    <property type="protein sequence ID" value="BAB81981.1"/>
    <property type="molecule type" value="Genomic_DNA"/>
</dbReference>
<dbReference type="EMBL" id="AY082069">
    <property type="protein sequence ID" value="AAL96770.1"/>
    <property type="molecule type" value="Genomic_DNA"/>
</dbReference>
<dbReference type="RefSeq" id="WP_003460104.1">
    <property type="nucleotide sequence ID" value="NC_003366.1"/>
</dbReference>
<dbReference type="SMR" id="Q8XI46"/>
<dbReference type="STRING" id="195102.gene:10491583"/>
<dbReference type="GeneID" id="93001164"/>
<dbReference type="KEGG" id="cpe:CPE2275"/>
<dbReference type="HOGENOM" id="CLU_014340_0_5_9"/>
<dbReference type="UniPathway" id="UPA00189">
    <property type="reaction ID" value="UER00296"/>
</dbReference>
<dbReference type="Proteomes" id="UP000000818">
    <property type="component" value="Chromosome"/>
</dbReference>
<dbReference type="GO" id="GO:0005829">
    <property type="term" value="C:cytosol"/>
    <property type="evidence" value="ECO:0007669"/>
    <property type="project" value="TreeGrafter"/>
</dbReference>
<dbReference type="GO" id="GO:0005524">
    <property type="term" value="F:ATP binding"/>
    <property type="evidence" value="ECO:0007669"/>
    <property type="project" value="UniProtKB-UniRule"/>
</dbReference>
<dbReference type="GO" id="GO:0003921">
    <property type="term" value="F:GMP synthase activity"/>
    <property type="evidence" value="ECO:0007669"/>
    <property type="project" value="InterPro"/>
</dbReference>
<dbReference type="CDD" id="cd01742">
    <property type="entry name" value="GATase1_GMP_Synthase"/>
    <property type="match status" value="1"/>
</dbReference>
<dbReference type="CDD" id="cd01997">
    <property type="entry name" value="GMP_synthase_C"/>
    <property type="match status" value="1"/>
</dbReference>
<dbReference type="FunFam" id="3.30.300.10:FF:000002">
    <property type="entry name" value="GMP synthase [glutamine-hydrolyzing]"/>
    <property type="match status" value="1"/>
</dbReference>
<dbReference type="FunFam" id="3.40.50.620:FF:000001">
    <property type="entry name" value="GMP synthase [glutamine-hydrolyzing]"/>
    <property type="match status" value="1"/>
</dbReference>
<dbReference type="FunFam" id="3.40.50.880:FF:000001">
    <property type="entry name" value="GMP synthase [glutamine-hydrolyzing]"/>
    <property type="match status" value="1"/>
</dbReference>
<dbReference type="Gene3D" id="3.30.300.10">
    <property type="match status" value="1"/>
</dbReference>
<dbReference type="Gene3D" id="3.40.50.880">
    <property type="match status" value="1"/>
</dbReference>
<dbReference type="Gene3D" id="3.40.50.620">
    <property type="entry name" value="HUPs"/>
    <property type="match status" value="1"/>
</dbReference>
<dbReference type="HAMAP" id="MF_00344">
    <property type="entry name" value="GMP_synthase"/>
    <property type="match status" value="1"/>
</dbReference>
<dbReference type="InterPro" id="IPR029062">
    <property type="entry name" value="Class_I_gatase-like"/>
</dbReference>
<dbReference type="InterPro" id="IPR017926">
    <property type="entry name" value="GATASE"/>
</dbReference>
<dbReference type="InterPro" id="IPR001674">
    <property type="entry name" value="GMP_synth_C"/>
</dbReference>
<dbReference type="InterPro" id="IPR004739">
    <property type="entry name" value="GMP_synth_GATase"/>
</dbReference>
<dbReference type="InterPro" id="IPR022955">
    <property type="entry name" value="GMP_synthase"/>
</dbReference>
<dbReference type="InterPro" id="IPR025777">
    <property type="entry name" value="GMPS_ATP_PPase_dom"/>
</dbReference>
<dbReference type="InterPro" id="IPR022310">
    <property type="entry name" value="NAD/GMP_synthase"/>
</dbReference>
<dbReference type="InterPro" id="IPR014729">
    <property type="entry name" value="Rossmann-like_a/b/a_fold"/>
</dbReference>
<dbReference type="NCBIfam" id="TIGR00884">
    <property type="entry name" value="guaA_Cterm"/>
    <property type="match status" value="1"/>
</dbReference>
<dbReference type="NCBIfam" id="TIGR00888">
    <property type="entry name" value="guaA_Nterm"/>
    <property type="match status" value="1"/>
</dbReference>
<dbReference type="NCBIfam" id="NF000848">
    <property type="entry name" value="PRK00074.1"/>
    <property type="match status" value="1"/>
</dbReference>
<dbReference type="PANTHER" id="PTHR11922:SF2">
    <property type="entry name" value="GMP SYNTHASE [GLUTAMINE-HYDROLYZING]"/>
    <property type="match status" value="1"/>
</dbReference>
<dbReference type="PANTHER" id="PTHR11922">
    <property type="entry name" value="GMP SYNTHASE-RELATED"/>
    <property type="match status" value="1"/>
</dbReference>
<dbReference type="Pfam" id="PF00117">
    <property type="entry name" value="GATase"/>
    <property type="match status" value="1"/>
</dbReference>
<dbReference type="Pfam" id="PF00958">
    <property type="entry name" value="GMP_synt_C"/>
    <property type="match status" value="1"/>
</dbReference>
<dbReference type="Pfam" id="PF02540">
    <property type="entry name" value="NAD_synthase"/>
    <property type="match status" value="1"/>
</dbReference>
<dbReference type="PRINTS" id="PR00099">
    <property type="entry name" value="CPSGATASE"/>
</dbReference>
<dbReference type="PRINTS" id="PR00096">
    <property type="entry name" value="GATASE"/>
</dbReference>
<dbReference type="SUPFAM" id="SSF52402">
    <property type="entry name" value="Adenine nucleotide alpha hydrolases-like"/>
    <property type="match status" value="1"/>
</dbReference>
<dbReference type="SUPFAM" id="SSF52317">
    <property type="entry name" value="Class I glutamine amidotransferase-like"/>
    <property type="match status" value="1"/>
</dbReference>
<dbReference type="PROSITE" id="PS51273">
    <property type="entry name" value="GATASE_TYPE_1"/>
    <property type="match status" value="1"/>
</dbReference>
<dbReference type="PROSITE" id="PS51553">
    <property type="entry name" value="GMPS_ATP_PPASE"/>
    <property type="match status" value="1"/>
</dbReference>
<proteinExistence type="inferred from homology"/>